<organism>
    <name type="scientific">Escherichia coli O157:H7</name>
    <dbReference type="NCBI Taxonomy" id="83334"/>
    <lineage>
        <taxon>Bacteria</taxon>
        <taxon>Pseudomonadati</taxon>
        <taxon>Pseudomonadota</taxon>
        <taxon>Gammaproteobacteria</taxon>
        <taxon>Enterobacterales</taxon>
        <taxon>Enterobacteriaceae</taxon>
        <taxon>Escherichia</taxon>
    </lineage>
</organism>
<name>DADA_ECO57</name>
<accession>P0A6J7</accession>
<accession>P29011</accession>
<sequence length="432" mass="47607">MRVVILGSGVVGVASAWYLNQAGHEVTVIDREPGAALETSAANAGQISPGYAAPWAAPGVPLKAIKWMFQRHAPLAVRLDGTQFQLKWMWQMLRNCDTSHYMENKGRMVRLAEYSRDCLKALRAETNIQYEGRQGGTLQLFRTEQQYENATRDIAVLEDAGVPYQLLESSRLAEVEPALAEVAHKLTGGLQLPNDETGDCQLFTQNLARMAEQAGVKFRFNTPVDQLLCDGEQIYGVKCGDEVIKADAYVMAFGSYSTAMLKGIVDIPVYPLKGYSLTIPIAQEDGAPVSTILDETYKIAITRFDNRIRVGGMAEIVGFNTELLQPRRETLEMVVRDLYPRGGHVEQATFWTGLRPMTPDGTPVVGRTRFKNLWLNTGHGTLGWTMACGSGQLLSDLLSGRTPAIPYEDLSVARYSRGFTPSRPGHLHGAHS</sequence>
<evidence type="ECO:0000250" key="1"/>
<evidence type="ECO:0000255" key="2"/>
<evidence type="ECO:0000305" key="3"/>
<feature type="chain" id="PRO_0000166133" description="D-amino acid dehydrogenase">
    <location>
        <begin position="1"/>
        <end position="432"/>
    </location>
</feature>
<feature type="binding site" evidence="2">
    <location>
        <begin position="3"/>
        <end position="17"/>
    </location>
    <ligand>
        <name>FAD</name>
        <dbReference type="ChEBI" id="CHEBI:57692"/>
    </ligand>
</feature>
<reference key="1">
    <citation type="journal article" date="2001" name="Nature">
        <title>Genome sequence of enterohaemorrhagic Escherichia coli O157:H7.</title>
        <authorList>
            <person name="Perna N.T."/>
            <person name="Plunkett G. III"/>
            <person name="Burland V."/>
            <person name="Mau B."/>
            <person name="Glasner J.D."/>
            <person name="Rose D.J."/>
            <person name="Mayhew G.F."/>
            <person name="Evans P.S."/>
            <person name="Gregor J."/>
            <person name="Kirkpatrick H.A."/>
            <person name="Posfai G."/>
            <person name="Hackett J."/>
            <person name="Klink S."/>
            <person name="Boutin A."/>
            <person name="Shao Y."/>
            <person name="Miller L."/>
            <person name="Grotbeck E.J."/>
            <person name="Davis N.W."/>
            <person name="Lim A."/>
            <person name="Dimalanta E.T."/>
            <person name="Potamousis K."/>
            <person name="Apodaca J."/>
            <person name="Anantharaman T.S."/>
            <person name="Lin J."/>
            <person name="Yen G."/>
            <person name="Schwartz D.C."/>
            <person name="Welch R.A."/>
            <person name="Blattner F.R."/>
        </authorList>
    </citation>
    <scope>NUCLEOTIDE SEQUENCE [LARGE SCALE GENOMIC DNA]</scope>
    <source>
        <strain>O157:H7 / EDL933 / ATCC 700927 / EHEC</strain>
    </source>
</reference>
<reference key="2">
    <citation type="journal article" date="2001" name="DNA Res.">
        <title>Complete genome sequence of enterohemorrhagic Escherichia coli O157:H7 and genomic comparison with a laboratory strain K-12.</title>
        <authorList>
            <person name="Hayashi T."/>
            <person name="Makino K."/>
            <person name="Ohnishi M."/>
            <person name="Kurokawa K."/>
            <person name="Ishii K."/>
            <person name="Yokoyama K."/>
            <person name="Han C.-G."/>
            <person name="Ohtsubo E."/>
            <person name="Nakayama K."/>
            <person name="Murata T."/>
            <person name="Tanaka M."/>
            <person name="Tobe T."/>
            <person name="Iida T."/>
            <person name="Takami H."/>
            <person name="Honda T."/>
            <person name="Sasakawa C."/>
            <person name="Ogasawara N."/>
            <person name="Yasunaga T."/>
            <person name="Kuhara S."/>
            <person name="Shiba T."/>
            <person name="Hattori M."/>
            <person name="Shinagawa H."/>
        </authorList>
    </citation>
    <scope>NUCLEOTIDE SEQUENCE [LARGE SCALE GENOMIC DNA]</scope>
    <source>
        <strain>O157:H7 / Sakai / RIMD 0509952 / EHEC</strain>
    </source>
</reference>
<proteinExistence type="evidence at transcript level"/>
<gene>
    <name type="primary">dadA</name>
    <name type="synonym">dadR</name>
    <name type="ordered locus">Z1952</name>
    <name type="ordered locus">ECs1684</name>
</gene>
<comment type="function">
    <text evidence="1">Oxidative deamination of D-amino acids.</text>
</comment>
<comment type="catalytic activity">
    <reaction>
        <text>a D-alpha-amino acid + A + H2O = a 2-oxocarboxylate + AH2 + NH4(+)</text>
        <dbReference type="Rhea" id="RHEA:18125"/>
        <dbReference type="ChEBI" id="CHEBI:13193"/>
        <dbReference type="ChEBI" id="CHEBI:15377"/>
        <dbReference type="ChEBI" id="CHEBI:17499"/>
        <dbReference type="ChEBI" id="CHEBI:28938"/>
        <dbReference type="ChEBI" id="CHEBI:35179"/>
        <dbReference type="ChEBI" id="CHEBI:59871"/>
    </reaction>
</comment>
<comment type="cofactor">
    <cofactor evidence="1">
        <name>FAD</name>
        <dbReference type="ChEBI" id="CHEBI:57692"/>
    </cofactor>
</comment>
<comment type="pathway">
    <text>Amino-acid degradation; D-alanine degradation; NH(3) and pyruvate from D-alanine: step 1/1.</text>
</comment>
<comment type="subcellular location">
    <subcellularLocation>
        <location evidence="1">Cell inner membrane</location>
        <topology evidence="1">Peripheral membrane protein</topology>
    </subcellularLocation>
</comment>
<comment type="induction">
    <text>By alanine.</text>
</comment>
<comment type="similarity">
    <text evidence="3">Belongs to the DadA oxidoreductase family.</text>
</comment>
<dbReference type="EC" id="1.4.99.-"/>
<dbReference type="EMBL" id="AE005174">
    <property type="protein sequence ID" value="AAG56040.1"/>
    <property type="molecule type" value="Genomic_DNA"/>
</dbReference>
<dbReference type="EMBL" id="BA000007">
    <property type="protein sequence ID" value="BAB35107.1"/>
    <property type="molecule type" value="Genomic_DNA"/>
</dbReference>
<dbReference type="PIR" id="D85697">
    <property type="entry name" value="D85697"/>
</dbReference>
<dbReference type="PIR" id="D90839">
    <property type="entry name" value="D90839"/>
</dbReference>
<dbReference type="RefSeq" id="NP_309711.1">
    <property type="nucleotide sequence ID" value="NC_002695.1"/>
</dbReference>
<dbReference type="RefSeq" id="WP_001266908.1">
    <property type="nucleotide sequence ID" value="NZ_VOAI01000042.1"/>
</dbReference>
<dbReference type="SMR" id="P0A6J7"/>
<dbReference type="STRING" id="155864.Z1952"/>
<dbReference type="GeneID" id="913186"/>
<dbReference type="GeneID" id="93776243"/>
<dbReference type="KEGG" id="ece:Z1952"/>
<dbReference type="KEGG" id="ecs:ECs_1684"/>
<dbReference type="PATRIC" id="fig|386585.9.peg.1781"/>
<dbReference type="eggNOG" id="COG0665">
    <property type="taxonomic scope" value="Bacteria"/>
</dbReference>
<dbReference type="HOGENOM" id="CLU_007884_9_2_6"/>
<dbReference type="UniPathway" id="UPA00043">
    <property type="reaction ID" value="UER00498"/>
</dbReference>
<dbReference type="Proteomes" id="UP000000558">
    <property type="component" value="Chromosome"/>
</dbReference>
<dbReference type="Proteomes" id="UP000002519">
    <property type="component" value="Chromosome"/>
</dbReference>
<dbReference type="GO" id="GO:0005737">
    <property type="term" value="C:cytoplasm"/>
    <property type="evidence" value="ECO:0007669"/>
    <property type="project" value="TreeGrafter"/>
</dbReference>
<dbReference type="GO" id="GO:0005886">
    <property type="term" value="C:plasma membrane"/>
    <property type="evidence" value="ECO:0007669"/>
    <property type="project" value="UniProtKB-SubCell"/>
</dbReference>
<dbReference type="GO" id="GO:0008718">
    <property type="term" value="F:D-amino-acid dehydrogenase activity"/>
    <property type="evidence" value="ECO:0007669"/>
    <property type="project" value="UniProtKB-UniRule"/>
</dbReference>
<dbReference type="GO" id="GO:0055130">
    <property type="term" value="P:D-alanine catabolic process"/>
    <property type="evidence" value="ECO:0007669"/>
    <property type="project" value="UniProtKB-UniPathway"/>
</dbReference>
<dbReference type="FunFam" id="3.50.50.60:FF:000020">
    <property type="entry name" value="D-amino acid dehydrogenase"/>
    <property type="match status" value="1"/>
</dbReference>
<dbReference type="Gene3D" id="3.30.9.10">
    <property type="entry name" value="D-Amino Acid Oxidase, subunit A, domain 2"/>
    <property type="match status" value="1"/>
</dbReference>
<dbReference type="Gene3D" id="3.50.50.60">
    <property type="entry name" value="FAD/NAD(P)-binding domain"/>
    <property type="match status" value="2"/>
</dbReference>
<dbReference type="HAMAP" id="MF_01202">
    <property type="entry name" value="DadA"/>
    <property type="match status" value="1"/>
</dbReference>
<dbReference type="InterPro" id="IPR023080">
    <property type="entry name" value="DadA"/>
</dbReference>
<dbReference type="InterPro" id="IPR006076">
    <property type="entry name" value="FAD-dep_OxRdtase"/>
</dbReference>
<dbReference type="InterPro" id="IPR036188">
    <property type="entry name" value="FAD/NAD-bd_sf"/>
</dbReference>
<dbReference type="NCBIfam" id="NF001933">
    <property type="entry name" value="PRK00711.1"/>
    <property type="match status" value="1"/>
</dbReference>
<dbReference type="PANTHER" id="PTHR13847:SF280">
    <property type="entry name" value="D-AMINO ACID DEHYDROGENASE"/>
    <property type="match status" value="1"/>
</dbReference>
<dbReference type="PANTHER" id="PTHR13847">
    <property type="entry name" value="SARCOSINE DEHYDROGENASE-RELATED"/>
    <property type="match status" value="1"/>
</dbReference>
<dbReference type="Pfam" id="PF01266">
    <property type="entry name" value="DAO"/>
    <property type="match status" value="1"/>
</dbReference>
<dbReference type="SUPFAM" id="SSF54373">
    <property type="entry name" value="FAD-linked reductases, C-terminal domain"/>
    <property type="match status" value="1"/>
</dbReference>
<dbReference type="SUPFAM" id="SSF51905">
    <property type="entry name" value="FAD/NAD(P)-binding domain"/>
    <property type="match status" value="1"/>
</dbReference>
<keyword id="KW-0997">Cell inner membrane</keyword>
<keyword id="KW-1003">Cell membrane</keyword>
<keyword id="KW-0274">FAD</keyword>
<keyword id="KW-0285">Flavoprotein</keyword>
<keyword id="KW-0472">Membrane</keyword>
<keyword id="KW-0560">Oxidoreductase</keyword>
<keyword id="KW-1185">Reference proteome</keyword>
<protein>
    <recommendedName>
        <fullName>D-amino acid dehydrogenase</fullName>
        <ecNumber>1.4.99.-</ecNumber>
    </recommendedName>
</protein>